<name>MUTL_LEPIN</name>
<sequence>MGKIQELSPELINQIAAGEVIESAHSVVKELMENSMDASATQVDVESKDGGLSLLRITDNGTGIEPEDLEPALKRHATSKIQDYKDLESVLSYGFRGEALASIASVSRLTLESGTKEQKTAWKTRSVAGKISEKEEIPGFIGTKILVEELFFNTPVRRKFLKSIRSEDKKIRDRVTTQALAREDVRFRLFQDGKEVFVLPTRENKKERIIDLFGENFRDHLLEVSLERGGIQATGYISDPDFYKSNRTGQFIFINGRPIEIKYSSVLLKKAYDELLPPNGHPYCFLFFEIDPSRVDVNVHPAKREIRFLDEDGFNGFFLALIQKELRSSTPVSFLELKKRLLKPAPETHSTTSFYQARSSGKNPLLGRELFSGVSKQEGFELDRMGPGVSLSELTDERVKHSSFVPKKHFGVLFETFILAEAEDGFYIIDQHTAHERIRYEEVLRKLEKRNYGIQPLLTPIRIDVSKQEQEDILNRKKEYEEVGIFLDPLGEDSIVLREIPAYMEPGQEKEIVLDFLNRTEGKETSEPELYDLMAKCVACRSAIKKGDQLSDPILAEILNRLSYCENPSRCPHGRPTLVKLSRDDLERMFHRK</sequence>
<comment type="function">
    <text evidence="1">This protein is involved in the repair of mismatches in DNA. It is required for dam-dependent methyl-directed DNA mismatch repair. May act as a 'molecular matchmaker', a protein that promotes the formation of a stable complex between two or more DNA-binding proteins in an ATP-dependent manner without itself being part of a final effector complex.</text>
</comment>
<comment type="similarity">
    <text evidence="1">Belongs to the DNA mismatch repair MutL/HexB family.</text>
</comment>
<accession>Q8F6X4</accession>
<organism>
    <name type="scientific">Leptospira interrogans serogroup Icterohaemorrhagiae serovar Lai (strain 56601)</name>
    <dbReference type="NCBI Taxonomy" id="189518"/>
    <lineage>
        <taxon>Bacteria</taxon>
        <taxon>Pseudomonadati</taxon>
        <taxon>Spirochaetota</taxon>
        <taxon>Spirochaetia</taxon>
        <taxon>Leptospirales</taxon>
        <taxon>Leptospiraceae</taxon>
        <taxon>Leptospira</taxon>
    </lineage>
</organism>
<gene>
    <name evidence="1" type="primary">mutL</name>
    <name type="ordered locus">LA_1175</name>
</gene>
<keyword id="KW-0227">DNA damage</keyword>
<keyword id="KW-0234">DNA repair</keyword>
<keyword id="KW-1185">Reference proteome</keyword>
<reference key="1">
    <citation type="journal article" date="2003" name="Nature">
        <title>Unique physiological and pathogenic features of Leptospira interrogans revealed by whole-genome sequencing.</title>
        <authorList>
            <person name="Ren S.-X."/>
            <person name="Fu G."/>
            <person name="Jiang X.-G."/>
            <person name="Zeng R."/>
            <person name="Miao Y.-G."/>
            <person name="Xu H."/>
            <person name="Zhang Y.-X."/>
            <person name="Xiong H."/>
            <person name="Lu G."/>
            <person name="Lu L.-F."/>
            <person name="Jiang H.-Q."/>
            <person name="Jia J."/>
            <person name="Tu Y.-F."/>
            <person name="Jiang J.-X."/>
            <person name="Gu W.-Y."/>
            <person name="Zhang Y.-Q."/>
            <person name="Cai Z."/>
            <person name="Sheng H.-H."/>
            <person name="Yin H.-F."/>
            <person name="Zhang Y."/>
            <person name="Zhu G.-F."/>
            <person name="Wan M."/>
            <person name="Huang H.-L."/>
            <person name="Qian Z."/>
            <person name="Wang S.-Y."/>
            <person name="Ma W."/>
            <person name="Yao Z.-J."/>
            <person name="Shen Y."/>
            <person name="Qiang B.-Q."/>
            <person name="Xia Q.-C."/>
            <person name="Guo X.-K."/>
            <person name="Danchin A."/>
            <person name="Saint Girons I."/>
            <person name="Somerville R.L."/>
            <person name="Wen Y.-M."/>
            <person name="Shi M.-H."/>
            <person name="Chen Z."/>
            <person name="Xu J.-G."/>
            <person name="Zhao G.-P."/>
        </authorList>
    </citation>
    <scope>NUCLEOTIDE SEQUENCE [LARGE SCALE GENOMIC DNA]</scope>
    <source>
        <strain>56601</strain>
    </source>
</reference>
<proteinExistence type="inferred from homology"/>
<protein>
    <recommendedName>
        <fullName evidence="1">DNA mismatch repair protein MutL</fullName>
    </recommendedName>
</protein>
<dbReference type="EMBL" id="AE010300">
    <property type="protein sequence ID" value="AAN48374.2"/>
    <property type="molecule type" value="Genomic_DNA"/>
</dbReference>
<dbReference type="RefSeq" id="NP_711356.2">
    <property type="nucleotide sequence ID" value="NC_004342.2"/>
</dbReference>
<dbReference type="RefSeq" id="WP_000516444.1">
    <property type="nucleotide sequence ID" value="NC_004342.2"/>
</dbReference>
<dbReference type="SMR" id="Q8F6X4"/>
<dbReference type="FunCoup" id="Q8F6X4">
    <property type="interactions" value="222"/>
</dbReference>
<dbReference type="STRING" id="189518.LA_1175"/>
<dbReference type="PaxDb" id="189518-LA_1175"/>
<dbReference type="EnsemblBacteria" id="AAN48374">
    <property type="protein sequence ID" value="AAN48374"/>
    <property type="gene ID" value="LA_1175"/>
</dbReference>
<dbReference type="GeneID" id="61142391"/>
<dbReference type="KEGG" id="lil:LA_1175"/>
<dbReference type="PATRIC" id="fig|189518.3.peg.1170"/>
<dbReference type="HOGENOM" id="CLU_004131_4_1_12"/>
<dbReference type="InParanoid" id="Q8F6X4"/>
<dbReference type="OrthoDB" id="9763467at2"/>
<dbReference type="Proteomes" id="UP000001408">
    <property type="component" value="Chromosome I"/>
</dbReference>
<dbReference type="GO" id="GO:0032300">
    <property type="term" value="C:mismatch repair complex"/>
    <property type="evidence" value="ECO:0000318"/>
    <property type="project" value="GO_Central"/>
</dbReference>
<dbReference type="GO" id="GO:0005524">
    <property type="term" value="F:ATP binding"/>
    <property type="evidence" value="ECO:0007669"/>
    <property type="project" value="InterPro"/>
</dbReference>
<dbReference type="GO" id="GO:0016887">
    <property type="term" value="F:ATP hydrolysis activity"/>
    <property type="evidence" value="ECO:0000318"/>
    <property type="project" value="GO_Central"/>
</dbReference>
<dbReference type="GO" id="GO:0140664">
    <property type="term" value="F:ATP-dependent DNA damage sensor activity"/>
    <property type="evidence" value="ECO:0007669"/>
    <property type="project" value="InterPro"/>
</dbReference>
<dbReference type="GO" id="GO:0030983">
    <property type="term" value="F:mismatched DNA binding"/>
    <property type="evidence" value="ECO:0007669"/>
    <property type="project" value="InterPro"/>
</dbReference>
<dbReference type="GO" id="GO:0006298">
    <property type="term" value="P:mismatch repair"/>
    <property type="evidence" value="ECO:0000318"/>
    <property type="project" value="GO_Central"/>
</dbReference>
<dbReference type="CDD" id="cd16926">
    <property type="entry name" value="HATPase_MutL-MLH-PMS-like"/>
    <property type="match status" value="1"/>
</dbReference>
<dbReference type="CDD" id="cd00782">
    <property type="entry name" value="MutL_Trans"/>
    <property type="match status" value="1"/>
</dbReference>
<dbReference type="FunFam" id="3.30.565.10:FF:000003">
    <property type="entry name" value="DNA mismatch repair endonuclease MutL"/>
    <property type="match status" value="1"/>
</dbReference>
<dbReference type="FunFam" id="3.30.230.10:FF:000078">
    <property type="entry name" value="DNA mismatch repair protein MutL"/>
    <property type="match status" value="1"/>
</dbReference>
<dbReference type="Gene3D" id="3.30.230.10">
    <property type="match status" value="1"/>
</dbReference>
<dbReference type="Gene3D" id="3.30.565.10">
    <property type="entry name" value="Histidine kinase-like ATPase, C-terminal domain"/>
    <property type="match status" value="1"/>
</dbReference>
<dbReference type="Gene3D" id="3.30.1540.20">
    <property type="entry name" value="MutL, C-terminal domain, dimerisation subdomain"/>
    <property type="match status" value="1"/>
</dbReference>
<dbReference type="Gene3D" id="3.30.1370.100">
    <property type="entry name" value="MutL, C-terminal domain, regulatory subdomain"/>
    <property type="match status" value="1"/>
</dbReference>
<dbReference type="HAMAP" id="MF_00149">
    <property type="entry name" value="DNA_mis_repair"/>
    <property type="match status" value="1"/>
</dbReference>
<dbReference type="InterPro" id="IPR014762">
    <property type="entry name" value="DNA_mismatch_repair_CS"/>
</dbReference>
<dbReference type="InterPro" id="IPR020667">
    <property type="entry name" value="DNA_mismatch_repair_MutL"/>
</dbReference>
<dbReference type="InterPro" id="IPR013507">
    <property type="entry name" value="DNA_mismatch_S5_2-like"/>
</dbReference>
<dbReference type="InterPro" id="IPR036890">
    <property type="entry name" value="HATPase_C_sf"/>
</dbReference>
<dbReference type="InterPro" id="IPR002099">
    <property type="entry name" value="MutL/Mlh/PMS"/>
</dbReference>
<dbReference type="InterPro" id="IPR038973">
    <property type="entry name" value="MutL/Mlh/Pms-like"/>
</dbReference>
<dbReference type="InterPro" id="IPR014790">
    <property type="entry name" value="MutL_C"/>
</dbReference>
<dbReference type="InterPro" id="IPR042120">
    <property type="entry name" value="MutL_C_dimsub"/>
</dbReference>
<dbReference type="InterPro" id="IPR042121">
    <property type="entry name" value="MutL_C_regsub"/>
</dbReference>
<dbReference type="InterPro" id="IPR037198">
    <property type="entry name" value="MutL_C_sf"/>
</dbReference>
<dbReference type="InterPro" id="IPR020568">
    <property type="entry name" value="Ribosomal_Su5_D2-typ_SF"/>
</dbReference>
<dbReference type="InterPro" id="IPR014721">
    <property type="entry name" value="Ribsml_uS5_D2-typ_fold_subgr"/>
</dbReference>
<dbReference type="NCBIfam" id="TIGR00585">
    <property type="entry name" value="mutl"/>
    <property type="match status" value="1"/>
</dbReference>
<dbReference type="PANTHER" id="PTHR10073">
    <property type="entry name" value="DNA MISMATCH REPAIR PROTEIN MLH, PMS, MUTL"/>
    <property type="match status" value="1"/>
</dbReference>
<dbReference type="PANTHER" id="PTHR10073:SF12">
    <property type="entry name" value="DNA MISMATCH REPAIR PROTEIN MLH1"/>
    <property type="match status" value="1"/>
</dbReference>
<dbReference type="Pfam" id="PF01119">
    <property type="entry name" value="DNA_mis_repair"/>
    <property type="match status" value="1"/>
</dbReference>
<dbReference type="Pfam" id="PF13589">
    <property type="entry name" value="HATPase_c_3"/>
    <property type="match status" value="1"/>
</dbReference>
<dbReference type="Pfam" id="PF08676">
    <property type="entry name" value="MutL_C"/>
    <property type="match status" value="1"/>
</dbReference>
<dbReference type="SMART" id="SM01340">
    <property type="entry name" value="DNA_mis_repair"/>
    <property type="match status" value="1"/>
</dbReference>
<dbReference type="SMART" id="SM00853">
    <property type="entry name" value="MutL_C"/>
    <property type="match status" value="1"/>
</dbReference>
<dbReference type="SUPFAM" id="SSF55874">
    <property type="entry name" value="ATPase domain of HSP90 chaperone/DNA topoisomerase II/histidine kinase"/>
    <property type="match status" value="1"/>
</dbReference>
<dbReference type="SUPFAM" id="SSF118116">
    <property type="entry name" value="DNA mismatch repair protein MutL"/>
    <property type="match status" value="1"/>
</dbReference>
<dbReference type="SUPFAM" id="SSF54211">
    <property type="entry name" value="Ribosomal protein S5 domain 2-like"/>
    <property type="match status" value="1"/>
</dbReference>
<dbReference type="PROSITE" id="PS00058">
    <property type="entry name" value="DNA_MISMATCH_REPAIR_1"/>
    <property type="match status" value="1"/>
</dbReference>
<evidence type="ECO:0000255" key="1">
    <source>
        <dbReference type="HAMAP-Rule" id="MF_00149"/>
    </source>
</evidence>
<feature type="chain" id="PRO_0000177951" description="DNA mismatch repair protein MutL">
    <location>
        <begin position="1"/>
        <end position="593"/>
    </location>
</feature>